<name>VLOM_LAMBD</name>
<proteinExistence type="evidence at protein level"/>
<organism>
    <name type="scientific">Escherichia phage lambda</name>
    <name type="common">Bacteriophage lambda</name>
    <dbReference type="NCBI Taxonomy" id="2681611"/>
    <lineage>
        <taxon>Viruses</taxon>
        <taxon>Duplodnaviria</taxon>
        <taxon>Heunggongvirae</taxon>
        <taxon>Uroviricota</taxon>
        <taxon>Caudoviricetes</taxon>
        <taxon>Lambdavirus</taxon>
        <taxon>Lambdavirus lambda</taxon>
    </lineage>
</organism>
<comment type="function">
    <text>Incorporated into the outer membrane of the host during infection. Lom is expressed during lysogeny in E.coli.</text>
</comment>
<comment type="subcellular location">
    <subcellularLocation>
        <location>Host cell outer membrane</location>
        <topology>Multi-pass membrane protein</topology>
    </subcellularLocation>
</comment>
<comment type="similarity">
    <text evidence="2">Belongs to the outer membrane OOP (TC 1.B.6) superfamily. Ail family.</text>
</comment>
<feature type="signal peptide" evidence="1">
    <location>
        <begin position="1"/>
        <end status="unknown"/>
    </location>
</feature>
<feature type="chain" id="PRO_0000020205" description="Outer membrane protein lom">
    <location>
        <begin status="unknown"/>
        <end position="206"/>
    </location>
</feature>
<reference key="1">
    <citation type="journal article" date="1982" name="J. Mol. Biol.">
        <title>Nucleotide sequence of bacteriophage lambda DNA.</title>
        <authorList>
            <person name="Sanger F."/>
            <person name="Coulson A.R."/>
            <person name="Hong G.F."/>
            <person name="Hill D.F."/>
            <person name="Petersen G.B."/>
        </authorList>
    </citation>
    <scope>NUCLEOTIDE SEQUENCE [LARGE SCALE GENOMIC DNA]</scope>
</reference>
<reference key="2">
    <citation type="journal article" date="1990" name="Nature">
        <title>A bacterial virulence determinant encoded by lysogenic coliphage lambda.</title>
        <authorList>
            <person name="Barondes J.J."/>
            <person name="Beckwith J."/>
        </authorList>
    </citation>
    <scope>CHARACTERIZATION</scope>
</reference>
<organismHost>
    <name type="scientific">Escherichia coli</name>
    <dbReference type="NCBI Taxonomy" id="562"/>
</organismHost>
<protein>
    <recommendedName>
        <fullName>Outer membrane protein lom</fullName>
    </recommendedName>
    <alternativeName>
        <fullName>ORF 206A</fullName>
    </alternativeName>
</protein>
<keyword id="KW-1033">Host cell outer membrane</keyword>
<keyword id="KW-1043">Host membrane</keyword>
<keyword id="KW-0472">Membrane</keyword>
<keyword id="KW-1185">Reference proteome</keyword>
<keyword id="KW-0732">Signal</keyword>
<keyword id="KW-0812">Transmembrane</keyword>
<keyword id="KW-1134">Transmembrane beta strand</keyword>
<evidence type="ECO:0000255" key="1"/>
<evidence type="ECO:0000305" key="2"/>
<gene>
    <name type="primary">lom</name>
</gene>
<accession>P03701</accession>
<sequence length="206" mass="21856">MRNVCIAVAVFAALAVTVTPARAEGGHGTFTVGYFQVKPGTLPSLSGGDTGVSHLKGINVKYRYELTDSVGVMASLGFAASKKSSTVMTGEDTFHYESLRGRYVSVMAGPVLQISKQVSAYAMAGVAHSRWSGSTMDYRKTEITPGYMKETTTARDESAMRHTSVAWSAGIQINPAASVVVDIAYEGSGSGDWRTDGFIVGVGYKF</sequence>
<dbReference type="EMBL" id="J02459">
    <property type="protein sequence ID" value="AAA96554.1"/>
    <property type="molecule type" value="Genomic_DNA"/>
</dbReference>
<dbReference type="EMBL" id="X55793">
    <property type="protein sequence ID" value="CAA39318.1"/>
    <property type="molecule type" value="Genomic_DNA"/>
</dbReference>
<dbReference type="PIR" id="E94164">
    <property type="entry name" value="MMBPL"/>
</dbReference>
<dbReference type="RefSeq" id="NP_040601.1">
    <property type="nucleotide sequence ID" value="NC_001416.1"/>
</dbReference>
<dbReference type="SMR" id="P03701"/>
<dbReference type="GeneID" id="2703517"/>
<dbReference type="KEGG" id="vg:2703517"/>
<dbReference type="Proteomes" id="UP000001711">
    <property type="component" value="Genome"/>
</dbReference>
<dbReference type="GO" id="GO:0020002">
    <property type="term" value="C:host cell plasma membrane"/>
    <property type="evidence" value="ECO:0007669"/>
    <property type="project" value="UniProtKB-SubCell"/>
</dbReference>
<dbReference type="GO" id="GO:0044384">
    <property type="term" value="C:host outer membrane"/>
    <property type="evidence" value="ECO:0007669"/>
    <property type="project" value="InterPro"/>
</dbReference>
<dbReference type="GO" id="GO:0016020">
    <property type="term" value="C:membrane"/>
    <property type="evidence" value="ECO:0007669"/>
    <property type="project" value="UniProtKB-KW"/>
</dbReference>
<dbReference type="Gene3D" id="2.40.160.20">
    <property type="match status" value="1"/>
</dbReference>
<dbReference type="InterPro" id="IPR051723">
    <property type="entry name" value="Bact_OM_Invasion-Related"/>
</dbReference>
<dbReference type="InterPro" id="IPR000758">
    <property type="entry name" value="Enterovir_OMP"/>
</dbReference>
<dbReference type="InterPro" id="IPR011250">
    <property type="entry name" value="OMP/PagP_b-brl"/>
</dbReference>
<dbReference type="PANTHER" id="PTHR35892:SF2">
    <property type="entry name" value="OUTER MEMBRANE PROTEIN PAGN"/>
    <property type="match status" value="1"/>
</dbReference>
<dbReference type="PANTHER" id="PTHR35892">
    <property type="entry name" value="OUTER MEMBRANE PROTEIN PAGN-RELATED"/>
    <property type="match status" value="1"/>
</dbReference>
<dbReference type="Pfam" id="PF06316">
    <property type="entry name" value="Ail_Lom"/>
    <property type="match status" value="1"/>
</dbReference>
<dbReference type="PRINTS" id="PR00316">
    <property type="entry name" value="ENTEROVIROMP"/>
</dbReference>
<dbReference type="SUPFAM" id="SSF56925">
    <property type="entry name" value="OMPA-like"/>
    <property type="match status" value="1"/>
</dbReference>
<dbReference type="PROSITE" id="PS00694">
    <property type="entry name" value="ENT_VIR_OMP_1"/>
    <property type="match status" value="1"/>
</dbReference>
<dbReference type="PROSITE" id="PS00695">
    <property type="entry name" value="ENT_VIR_OMP_2"/>
    <property type="match status" value="1"/>
</dbReference>